<comment type="function">
    <text evidence="2">Component of the Mediator complex, a coactivator involved in the regulated transcription of nearly all RNA polymerase II-dependent genes. Mediator functions as a bridge to convey information from gene-specific regulatory proteins to the basal RNA polymerase II transcription machinery. Mediator is recruited to promoters by direct interactions with regulatory proteins and serves as a scaffold for the assembly of a functional pre-initiation complex with RNA polymerase II and the general transcription factors (By similarity).</text>
</comment>
<comment type="subunit">
    <text evidence="1">Component of the Mediator complex.</text>
</comment>
<comment type="subcellular location">
    <subcellularLocation>
        <location evidence="1">Nucleus</location>
    </subcellularLocation>
</comment>
<comment type="similarity">
    <text evidence="3">Belongs to the Mediator complex subunit 11 family.</text>
</comment>
<keyword id="KW-0010">Activator</keyword>
<keyword id="KW-0539">Nucleus</keyword>
<keyword id="KW-1185">Reference proteome</keyword>
<keyword id="KW-0804">Transcription</keyword>
<keyword id="KW-0805">Transcription regulation</keyword>
<evidence type="ECO:0000250" key="1"/>
<evidence type="ECO:0000250" key="2">
    <source>
        <dbReference type="UniProtKB" id="Q99278"/>
    </source>
</evidence>
<evidence type="ECO:0000305" key="3"/>
<proteinExistence type="inferred from homology"/>
<reference key="1">
    <citation type="journal article" date="2004" name="Nature">
        <title>Genome evolution in yeasts.</title>
        <authorList>
            <person name="Dujon B."/>
            <person name="Sherman D."/>
            <person name="Fischer G."/>
            <person name="Durrens P."/>
            <person name="Casaregola S."/>
            <person name="Lafontaine I."/>
            <person name="de Montigny J."/>
            <person name="Marck C."/>
            <person name="Neuveglise C."/>
            <person name="Talla E."/>
            <person name="Goffard N."/>
            <person name="Frangeul L."/>
            <person name="Aigle M."/>
            <person name="Anthouard V."/>
            <person name="Babour A."/>
            <person name="Barbe V."/>
            <person name="Barnay S."/>
            <person name="Blanchin S."/>
            <person name="Beckerich J.-M."/>
            <person name="Beyne E."/>
            <person name="Bleykasten C."/>
            <person name="Boisrame A."/>
            <person name="Boyer J."/>
            <person name="Cattolico L."/>
            <person name="Confanioleri F."/>
            <person name="de Daruvar A."/>
            <person name="Despons L."/>
            <person name="Fabre E."/>
            <person name="Fairhead C."/>
            <person name="Ferry-Dumazet H."/>
            <person name="Groppi A."/>
            <person name="Hantraye F."/>
            <person name="Hennequin C."/>
            <person name="Jauniaux N."/>
            <person name="Joyet P."/>
            <person name="Kachouri R."/>
            <person name="Kerrest A."/>
            <person name="Koszul R."/>
            <person name="Lemaire M."/>
            <person name="Lesur I."/>
            <person name="Ma L."/>
            <person name="Muller H."/>
            <person name="Nicaud J.-M."/>
            <person name="Nikolski M."/>
            <person name="Oztas S."/>
            <person name="Ozier-Kalogeropoulos O."/>
            <person name="Pellenz S."/>
            <person name="Potier S."/>
            <person name="Richard G.-F."/>
            <person name="Straub M.-L."/>
            <person name="Suleau A."/>
            <person name="Swennen D."/>
            <person name="Tekaia F."/>
            <person name="Wesolowski-Louvel M."/>
            <person name="Westhof E."/>
            <person name="Wirth B."/>
            <person name="Zeniou-Meyer M."/>
            <person name="Zivanovic Y."/>
            <person name="Bolotin-Fukuhara M."/>
            <person name="Thierry A."/>
            <person name="Bouchier C."/>
            <person name="Caudron B."/>
            <person name="Scarpelli C."/>
            <person name="Gaillardin C."/>
            <person name="Weissenbach J."/>
            <person name="Wincker P."/>
            <person name="Souciet J.-L."/>
        </authorList>
    </citation>
    <scope>NUCLEOTIDE SEQUENCE [LARGE SCALE GENOMIC DNA]</scope>
    <source>
        <strain>ATCC 2001 / BCRC 20586 / JCM 3761 / NBRC 0622 / NRRL Y-65 / CBS 138</strain>
    </source>
</reference>
<name>MED11_CANGA</name>
<feature type="chain" id="PRO_0000304319" description="Mediator of RNA polymerase II transcription subunit 11">
    <location>
        <begin position="1"/>
        <end position="125"/>
    </location>
</feature>
<gene>
    <name type="primary">MED11</name>
    <name type="ordered locus">CAGL0K03531g</name>
</gene>
<accession>Q6FN16</accession>
<sequence length="125" mass="14234">MSKSTLEQPEYVKERLESLAEVDRQLCSMLQEASQVAFTYGEVLRGNAMMKPQFQEHVSAFYSTLDNASGKLKKEIELLDENVGNRLLPINVNKKALGQDDDKLKEQMETLKEFLKTDNEETSTS</sequence>
<organism>
    <name type="scientific">Candida glabrata (strain ATCC 2001 / BCRC 20586 / JCM 3761 / NBRC 0622 / NRRL Y-65 / CBS 138)</name>
    <name type="common">Yeast</name>
    <name type="synonym">Nakaseomyces glabratus</name>
    <dbReference type="NCBI Taxonomy" id="284593"/>
    <lineage>
        <taxon>Eukaryota</taxon>
        <taxon>Fungi</taxon>
        <taxon>Dikarya</taxon>
        <taxon>Ascomycota</taxon>
        <taxon>Saccharomycotina</taxon>
        <taxon>Saccharomycetes</taxon>
        <taxon>Saccharomycetales</taxon>
        <taxon>Saccharomycetaceae</taxon>
        <taxon>Nakaseomyces</taxon>
    </lineage>
</organism>
<protein>
    <recommendedName>
        <fullName>Mediator of RNA polymerase II transcription subunit 11</fullName>
    </recommendedName>
    <alternativeName>
        <fullName>Mediator complex subunit 11</fullName>
    </alternativeName>
</protein>
<dbReference type="EMBL" id="CR380957">
    <property type="protein sequence ID" value="CAG61339.1"/>
    <property type="molecule type" value="Genomic_DNA"/>
</dbReference>
<dbReference type="RefSeq" id="XP_448378.1">
    <property type="nucleotide sequence ID" value="XM_448378.1"/>
</dbReference>
<dbReference type="SMR" id="Q6FN16"/>
<dbReference type="FunCoup" id="Q6FN16">
    <property type="interactions" value="140"/>
</dbReference>
<dbReference type="STRING" id="284593.Q6FN16"/>
<dbReference type="EnsemblFungi" id="CAGL0K03531g-T">
    <property type="protein sequence ID" value="CAGL0K03531g-T-p1"/>
    <property type="gene ID" value="CAGL0K03531g"/>
</dbReference>
<dbReference type="KEGG" id="cgr:2890179"/>
<dbReference type="CGD" id="CAL0134019">
    <property type="gene designation" value="CAGL0K03531g"/>
</dbReference>
<dbReference type="VEuPathDB" id="FungiDB:B1J91_K03531g"/>
<dbReference type="VEuPathDB" id="FungiDB:CAGL0K03531g"/>
<dbReference type="eggNOG" id="ENOG502S3YW">
    <property type="taxonomic scope" value="Eukaryota"/>
</dbReference>
<dbReference type="HOGENOM" id="CLU_121031_1_0_1"/>
<dbReference type="InParanoid" id="Q6FN16"/>
<dbReference type="OMA" id="IMDDNIG"/>
<dbReference type="Proteomes" id="UP000002428">
    <property type="component" value="Chromosome K"/>
</dbReference>
<dbReference type="GO" id="GO:0016592">
    <property type="term" value="C:mediator complex"/>
    <property type="evidence" value="ECO:0007669"/>
    <property type="project" value="InterPro"/>
</dbReference>
<dbReference type="GO" id="GO:0003712">
    <property type="term" value="F:transcription coregulator activity"/>
    <property type="evidence" value="ECO:0007669"/>
    <property type="project" value="InterPro"/>
</dbReference>
<dbReference type="GO" id="GO:0006357">
    <property type="term" value="P:regulation of transcription by RNA polymerase II"/>
    <property type="evidence" value="ECO:0007669"/>
    <property type="project" value="InterPro"/>
</dbReference>
<dbReference type="Gene3D" id="1.10.287.3490">
    <property type="match status" value="1"/>
</dbReference>
<dbReference type="InterPro" id="IPR019404">
    <property type="entry name" value="Mediator_Med11"/>
</dbReference>
<dbReference type="Pfam" id="PF10280">
    <property type="entry name" value="Med11"/>
    <property type="match status" value="1"/>
</dbReference>